<accession>Q9V595</accession>
<dbReference type="EC" id="4.1.1.37"/>
<dbReference type="EMBL" id="AE013599">
    <property type="protein sequence ID" value="AAF58922.1"/>
    <property type="molecule type" value="Genomic_DNA"/>
</dbReference>
<dbReference type="RefSeq" id="NP_610501.1">
    <property type="nucleotide sequence ID" value="NM_136657.3"/>
</dbReference>
<dbReference type="SMR" id="Q9V595"/>
<dbReference type="BioGRID" id="61817">
    <property type="interactions" value="2"/>
</dbReference>
<dbReference type="DIP" id="DIP-21696N"/>
<dbReference type="FunCoup" id="Q9V595">
    <property type="interactions" value="917"/>
</dbReference>
<dbReference type="IntAct" id="Q9V595">
    <property type="interactions" value="1"/>
</dbReference>
<dbReference type="STRING" id="7227.FBpp0087607"/>
<dbReference type="PaxDb" id="7227-FBpp0113059"/>
<dbReference type="DNASU" id="35986"/>
<dbReference type="EnsemblMetazoa" id="FBtr0088524">
    <property type="protein sequence ID" value="FBpp0087607"/>
    <property type="gene ID" value="FBgn0033428"/>
</dbReference>
<dbReference type="GeneID" id="35986"/>
<dbReference type="KEGG" id="dme:Dmel_CG1818"/>
<dbReference type="UCSC" id="CG1818-RA">
    <property type="organism name" value="d. melanogaster"/>
</dbReference>
<dbReference type="AGR" id="FB:FBgn0033428"/>
<dbReference type="CTD" id="7389"/>
<dbReference type="FlyBase" id="FBgn0033428">
    <property type="gene designation" value="Urod"/>
</dbReference>
<dbReference type="VEuPathDB" id="VectorBase:FBgn0033428"/>
<dbReference type="eggNOG" id="KOG2872">
    <property type="taxonomic scope" value="Eukaryota"/>
</dbReference>
<dbReference type="GeneTree" id="ENSGT00390000018302"/>
<dbReference type="HOGENOM" id="CLU_040933_0_0_1"/>
<dbReference type="InParanoid" id="Q9V595"/>
<dbReference type="OMA" id="LWLMRQA"/>
<dbReference type="OrthoDB" id="339900at2759"/>
<dbReference type="PhylomeDB" id="Q9V595"/>
<dbReference type="Reactome" id="R-DME-189451">
    <property type="pathway name" value="Heme biosynthesis"/>
</dbReference>
<dbReference type="SignaLink" id="Q9V595"/>
<dbReference type="UniPathway" id="UPA00251">
    <property type="reaction ID" value="UER00321"/>
</dbReference>
<dbReference type="BioGRID-ORCS" id="35986">
    <property type="hits" value="0 hits in 1 CRISPR screen"/>
</dbReference>
<dbReference type="GenomeRNAi" id="35986"/>
<dbReference type="PRO" id="PR:Q9V595"/>
<dbReference type="Proteomes" id="UP000000803">
    <property type="component" value="Chromosome 2R"/>
</dbReference>
<dbReference type="Bgee" id="FBgn0033428">
    <property type="expression patterns" value="Expressed in eye disc (Drosophila) and 133 other cell types or tissues"/>
</dbReference>
<dbReference type="ExpressionAtlas" id="Q9V595">
    <property type="expression patterns" value="baseline and differential"/>
</dbReference>
<dbReference type="GO" id="GO:0005829">
    <property type="term" value="C:cytosol"/>
    <property type="evidence" value="ECO:0000318"/>
    <property type="project" value="GO_Central"/>
</dbReference>
<dbReference type="GO" id="GO:0004853">
    <property type="term" value="F:uroporphyrinogen decarboxylase activity"/>
    <property type="evidence" value="ECO:0000318"/>
    <property type="project" value="GO_Central"/>
</dbReference>
<dbReference type="GO" id="GO:0006783">
    <property type="term" value="P:heme biosynthetic process"/>
    <property type="evidence" value="ECO:0000318"/>
    <property type="project" value="GO_Central"/>
</dbReference>
<dbReference type="GO" id="GO:0006782">
    <property type="term" value="P:protoporphyrinogen IX biosynthetic process"/>
    <property type="evidence" value="ECO:0007669"/>
    <property type="project" value="UniProtKB-UniPathway"/>
</dbReference>
<dbReference type="CDD" id="cd00717">
    <property type="entry name" value="URO-D"/>
    <property type="match status" value="1"/>
</dbReference>
<dbReference type="FunFam" id="3.20.20.210:FF:000001">
    <property type="entry name" value="Uroporphyrinogen decarboxylase"/>
    <property type="match status" value="1"/>
</dbReference>
<dbReference type="Gene3D" id="3.20.20.210">
    <property type="match status" value="1"/>
</dbReference>
<dbReference type="HAMAP" id="MF_00218">
    <property type="entry name" value="URO_D"/>
    <property type="match status" value="1"/>
</dbReference>
<dbReference type="InterPro" id="IPR038071">
    <property type="entry name" value="UROD/MetE-like_sf"/>
</dbReference>
<dbReference type="InterPro" id="IPR006361">
    <property type="entry name" value="Uroporphyrinogen_deCO2ase_HemE"/>
</dbReference>
<dbReference type="InterPro" id="IPR000257">
    <property type="entry name" value="Uroporphyrinogen_deCOase"/>
</dbReference>
<dbReference type="NCBIfam" id="TIGR01464">
    <property type="entry name" value="hemE"/>
    <property type="match status" value="1"/>
</dbReference>
<dbReference type="PANTHER" id="PTHR21091">
    <property type="entry name" value="METHYLTETRAHYDROFOLATE:HOMOCYSTEINE METHYLTRANSFERASE RELATED"/>
    <property type="match status" value="1"/>
</dbReference>
<dbReference type="PANTHER" id="PTHR21091:SF169">
    <property type="entry name" value="UROPORPHYRINOGEN DECARBOXYLASE"/>
    <property type="match status" value="1"/>
</dbReference>
<dbReference type="Pfam" id="PF01208">
    <property type="entry name" value="URO-D"/>
    <property type="match status" value="1"/>
</dbReference>
<dbReference type="SUPFAM" id="SSF51726">
    <property type="entry name" value="UROD/MetE-like"/>
    <property type="match status" value="1"/>
</dbReference>
<dbReference type="PROSITE" id="PS00906">
    <property type="entry name" value="UROD_1"/>
    <property type="match status" value="1"/>
</dbReference>
<dbReference type="PROSITE" id="PS00907">
    <property type="entry name" value="UROD_2"/>
    <property type="match status" value="1"/>
</dbReference>
<name>DCUP_DROME</name>
<evidence type="ECO:0000250" key="1">
    <source>
        <dbReference type="UniProtKB" id="P06132"/>
    </source>
</evidence>
<evidence type="ECO:0000250" key="2">
    <source>
        <dbReference type="UniProtKB" id="P70697"/>
    </source>
</evidence>
<evidence type="ECO:0000305" key="3"/>
<evidence type="ECO:0000312" key="4">
    <source>
        <dbReference type="FlyBase" id="FBgn0033428"/>
    </source>
</evidence>
<reference key="1">
    <citation type="journal article" date="2000" name="Science">
        <title>The genome sequence of Drosophila melanogaster.</title>
        <authorList>
            <person name="Adams M.D."/>
            <person name="Celniker S.E."/>
            <person name="Holt R.A."/>
            <person name="Evans C.A."/>
            <person name="Gocayne J.D."/>
            <person name="Amanatides P.G."/>
            <person name="Scherer S.E."/>
            <person name="Li P.W."/>
            <person name="Hoskins R.A."/>
            <person name="Galle R.F."/>
            <person name="George R.A."/>
            <person name="Lewis S.E."/>
            <person name="Richards S."/>
            <person name="Ashburner M."/>
            <person name="Henderson S.N."/>
            <person name="Sutton G.G."/>
            <person name="Wortman J.R."/>
            <person name="Yandell M.D."/>
            <person name="Zhang Q."/>
            <person name="Chen L.X."/>
            <person name="Brandon R.C."/>
            <person name="Rogers Y.-H.C."/>
            <person name="Blazej R.G."/>
            <person name="Champe M."/>
            <person name="Pfeiffer B.D."/>
            <person name="Wan K.H."/>
            <person name="Doyle C."/>
            <person name="Baxter E.G."/>
            <person name="Helt G."/>
            <person name="Nelson C.R."/>
            <person name="Miklos G.L.G."/>
            <person name="Abril J.F."/>
            <person name="Agbayani A."/>
            <person name="An H.-J."/>
            <person name="Andrews-Pfannkoch C."/>
            <person name="Baldwin D."/>
            <person name="Ballew R.M."/>
            <person name="Basu A."/>
            <person name="Baxendale J."/>
            <person name="Bayraktaroglu L."/>
            <person name="Beasley E.M."/>
            <person name="Beeson K.Y."/>
            <person name="Benos P.V."/>
            <person name="Berman B.P."/>
            <person name="Bhandari D."/>
            <person name="Bolshakov S."/>
            <person name="Borkova D."/>
            <person name="Botchan M.R."/>
            <person name="Bouck J."/>
            <person name="Brokstein P."/>
            <person name="Brottier P."/>
            <person name="Burtis K.C."/>
            <person name="Busam D.A."/>
            <person name="Butler H."/>
            <person name="Cadieu E."/>
            <person name="Center A."/>
            <person name="Chandra I."/>
            <person name="Cherry J.M."/>
            <person name="Cawley S."/>
            <person name="Dahlke C."/>
            <person name="Davenport L.B."/>
            <person name="Davies P."/>
            <person name="de Pablos B."/>
            <person name="Delcher A."/>
            <person name="Deng Z."/>
            <person name="Mays A.D."/>
            <person name="Dew I."/>
            <person name="Dietz S.M."/>
            <person name="Dodson K."/>
            <person name="Doup L.E."/>
            <person name="Downes M."/>
            <person name="Dugan-Rocha S."/>
            <person name="Dunkov B.C."/>
            <person name="Dunn P."/>
            <person name="Durbin K.J."/>
            <person name="Evangelista C.C."/>
            <person name="Ferraz C."/>
            <person name="Ferriera S."/>
            <person name="Fleischmann W."/>
            <person name="Fosler C."/>
            <person name="Gabrielian A.E."/>
            <person name="Garg N.S."/>
            <person name="Gelbart W.M."/>
            <person name="Glasser K."/>
            <person name="Glodek A."/>
            <person name="Gong F."/>
            <person name="Gorrell J.H."/>
            <person name="Gu Z."/>
            <person name="Guan P."/>
            <person name="Harris M."/>
            <person name="Harris N.L."/>
            <person name="Harvey D.A."/>
            <person name="Heiman T.J."/>
            <person name="Hernandez J.R."/>
            <person name="Houck J."/>
            <person name="Hostin D."/>
            <person name="Houston K.A."/>
            <person name="Howland T.J."/>
            <person name="Wei M.-H."/>
            <person name="Ibegwam C."/>
            <person name="Jalali M."/>
            <person name="Kalush F."/>
            <person name="Karpen G.H."/>
            <person name="Ke Z."/>
            <person name="Kennison J.A."/>
            <person name="Ketchum K.A."/>
            <person name="Kimmel B.E."/>
            <person name="Kodira C.D."/>
            <person name="Kraft C.L."/>
            <person name="Kravitz S."/>
            <person name="Kulp D."/>
            <person name="Lai Z."/>
            <person name="Lasko P."/>
            <person name="Lei Y."/>
            <person name="Levitsky A.A."/>
            <person name="Li J.H."/>
            <person name="Li Z."/>
            <person name="Liang Y."/>
            <person name="Lin X."/>
            <person name="Liu X."/>
            <person name="Mattei B."/>
            <person name="McIntosh T.C."/>
            <person name="McLeod M.P."/>
            <person name="McPherson D."/>
            <person name="Merkulov G."/>
            <person name="Milshina N.V."/>
            <person name="Mobarry C."/>
            <person name="Morris J."/>
            <person name="Moshrefi A."/>
            <person name="Mount S.M."/>
            <person name="Moy M."/>
            <person name="Murphy B."/>
            <person name="Murphy L."/>
            <person name="Muzny D.M."/>
            <person name="Nelson D.L."/>
            <person name="Nelson D.R."/>
            <person name="Nelson K.A."/>
            <person name="Nixon K."/>
            <person name="Nusskern D.R."/>
            <person name="Pacleb J.M."/>
            <person name="Palazzolo M."/>
            <person name="Pittman G.S."/>
            <person name="Pan S."/>
            <person name="Pollard J."/>
            <person name="Puri V."/>
            <person name="Reese M.G."/>
            <person name="Reinert K."/>
            <person name="Remington K."/>
            <person name="Saunders R.D.C."/>
            <person name="Scheeler F."/>
            <person name="Shen H."/>
            <person name="Shue B.C."/>
            <person name="Siden-Kiamos I."/>
            <person name="Simpson M."/>
            <person name="Skupski M.P."/>
            <person name="Smith T.J."/>
            <person name="Spier E."/>
            <person name="Spradling A.C."/>
            <person name="Stapleton M."/>
            <person name="Strong R."/>
            <person name="Sun E."/>
            <person name="Svirskas R."/>
            <person name="Tector C."/>
            <person name="Turner R."/>
            <person name="Venter E."/>
            <person name="Wang A.H."/>
            <person name="Wang X."/>
            <person name="Wang Z.-Y."/>
            <person name="Wassarman D.A."/>
            <person name="Weinstock G.M."/>
            <person name="Weissenbach J."/>
            <person name="Williams S.M."/>
            <person name="Woodage T."/>
            <person name="Worley K.C."/>
            <person name="Wu D."/>
            <person name="Yang S."/>
            <person name="Yao Q.A."/>
            <person name="Ye J."/>
            <person name="Yeh R.-F."/>
            <person name="Zaveri J.S."/>
            <person name="Zhan M."/>
            <person name="Zhang G."/>
            <person name="Zhao Q."/>
            <person name="Zheng L."/>
            <person name="Zheng X.H."/>
            <person name="Zhong F.N."/>
            <person name="Zhong W."/>
            <person name="Zhou X."/>
            <person name="Zhu S.C."/>
            <person name="Zhu X."/>
            <person name="Smith H.O."/>
            <person name="Gibbs R.A."/>
            <person name="Myers E.W."/>
            <person name="Rubin G.M."/>
            <person name="Venter J.C."/>
        </authorList>
    </citation>
    <scope>NUCLEOTIDE SEQUENCE [LARGE SCALE GENOMIC DNA]</scope>
    <source>
        <strain>Berkeley</strain>
    </source>
</reference>
<reference key="2">
    <citation type="journal article" date="2002" name="Genome Biol.">
        <title>Annotation of the Drosophila melanogaster euchromatic genome: a systematic review.</title>
        <authorList>
            <person name="Misra S."/>
            <person name="Crosby M.A."/>
            <person name="Mungall C.J."/>
            <person name="Matthews B.B."/>
            <person name="Campbell K.S."/>
            <person name="Hradecky P."/>
            <person name="Huang Y."/>
            <person name="Kaminker J.S."/>
            <person name="Millburn G.H."/>
            <person name="Prochnik S.E."/>
            <person name="Smith C.D."/>
            <person name="Tupy J.L."/>
            <person name="Whitfield E.J."/>
            <person name="Bayraktaroglu L."/>
            <person name="Berman B.P."/>
            <person name="Bettencourt B.R."/>
            <person name="Celniker S.E."/>
            <person name="de Grey A.D.N.J."/>
            <person name="Drysdale R.A."/>
            <person name="Harris N.L."/>
            <person name="Richter J."/>
            <person name="Russo S."/>
            <person name="Schroeder A.J."/>
            <person name="Shu S.Q."/>
            <person name="Stapleton M."/>
            <person name="Yamada C."/>
            <person name="Ashburner M."/>
            <person name="Gelbart W.M."/>
            <person name="Rubin G.M."/>
            <person name="Lewis S.E."/>
        </authorList>
    </citation>
    <scope>GENOME REANNOTATION</scope>
    <source>
        <strain>Berkeley</strain>
    </source>
</reference>
<gene>
    <name evidence="4" type="primary">Urod</name>
    <name evidence="4" type="synonym">Updo</name>
    <name evidence="4" type="ORF">CG1818</name>
</gene>
<organism>
    <name type="scientific">Drosophila melanogaster</name>
    <name type="common">Fruit fly</name>
    <dbReference type="NCBI Taxonomy" id="7227"/>
    <lineage>
        <taxon>Eukaryota</taxon>
        <taxon>Metazoa</taxon>
        <taxon>Ecdysozoa</taxon>
        <taxon>Arthropoda</taxon>
        <taxon>Hexapoda</taxon>
        <taxon>Insecta</taxon>
        <taxon>Pterygota</taxon>
        <taxon>Neoptera</taxon>
        <taxon>Endopterygota</taxon>
        <taxon>Diptera</taxon>
        <taxon>Brachycera</taxon>
        <taxon>Muscomorpha</taxon>
        <taxon>Ephydroidea</taxon>
        <taxon>Drosophilidae</taxon>
        <taxon>Drosophila</taxon>
        <taxon>Sophophora</taxon>
    </lineage>
</organism>
<proteinExistence type="inferred from homology"/>
<sequence length="356" mass="39988">MKDAKPFPVLKNDNLLRAARGEVVDRVPVWVMRQAGRYLPEFQELRKHHDFFTVCRTPELACEVTMQPLRRFDLDASIIFSDILVIPQALGLTVEMHAGVGPVLPQPIVVPEDLKRLTPDGALSRLSYVGDAITMMRHKLEGRVPLIGFTGAPWTLMGYMIEGGGSKTMSKAKAWLNEHPEDSKLFLNLLTDAIVDYLEMQVKAGAQMLQVFESSAEHLSKEQFLQWCVPYLKRIRDELVDRLTKKAIPVVPMTLFAKGAGHSLKEQSELGYDVIGLDWTVDPLEARNLVGPNITLQGNLDPQDMYRDPDELRNLTTEMVHKFGKSRYIANLGHGITPQTPITSMEVLVEAVHKAL</sequence>
<feature type="chain" id="PRO_0000187573" description="Uroporphyrinogen decarboxylase">
    <location>
        <begin position="1"/>
        <end position="356"/>
    </location>
</feature>
<feature type="binding site" evidence="1">
    <location>
        <position position="33"/>
    </location>
    <ligand>
        <name>coproporphyrinogen I</name>
        <dbReference type="ChEBI" id="CHEBI:62631"/>
    </ligand>
</feature>
<feature type="binding site" evidence="1">
    <location>
        <position position="33"/>
    </location>
    <ligand>
        <name>coproporphyrinogen III</name>
        <dbReference type="ChEBI" id="CHEBI:57309"/>
    </ligand>
</feature>
<feature type="binding site" evidence="1">
    <location>
        <position position="35"/>
    </location>
    <ligand>
        <name>coproporphyrinogen I</name>
        <dbReference type="ChEBI" id="CHEBI:62631"/>
    </ligand>
</feature>
<feature type="binding site" evidence="1">
    <location>
        <position position="35"/>
    </location>
    <ligand>
        <name>coproporphyrinogen III</name>
        <dbReference type="ChEBI" id="CHEBI:57309"/>
    </ligand>
</feature>
<feature type="binding site" evidence="1">
    <location>
        <position position="37"/>
    </location>
    <ligand>
        <name>coproporphyrinogen I</name>
        <dbReference type="ChEBI" id="CHEBI:62631"/>
    </ligand>
</feature>
<feature type="binding site" evidence="1">
    <location>
        <position position="37"/>
    </location>
    <ligand>
        <name>coproporphyrinogen III</name>
        <dbReference type="ChEBI" id="CHEBI:57309"/>
    </ligand>
</feature>
<feature type="binding site" evidence="1">
    <location>
        <position position="46"/>
    </location>
    <ligand>
        <name>coproporphyrinogen I</name>
        <dbReference type="ChEBI" id="CHEBI:62631"/>
    </ligand>
</feature>
<feature type="binding site" evidence="1">
    <location>
        <position position="82"/>
    </location>
    <ligand>
        <name>coproporphyrinogen I</name>
        <dbReference type="ChEBI" id="CHEBI:62631"/>
    </ligand>
</feature>
<feature type="binding site" evidence="1">
    <location>
        <position position="82"/>
    </location>
    <ligand>
        <name>coproporphyrinogen III</name>
        <dbReference type="ChEBI" id="CHEBI:57309"/>
    </ligand>
</feature>
<feature type="binding site" evidence="1">
    <location>
        <position position="159"/>
    </location>
    <ligand>
        <name>coproporphyrinogen I</name>
        <dbReference type="ChEBI" id="CHEBI:62631"/>
    </ligand>
</feature>
<feature type="binding site" evidence="1">
    <location>
        <position position="159"/>
    </location>
    <ligand>
        <name>coproporphyrinogen III</name>
        <dbReference type="ChEBI" id="CHEBI:57309"/>
    </ligand>
</feature>
<feature type="binding site" evidence="1">
    <location>
        <position position="214"/>
    </location>
    <ligand>
        <name>coproporphyrinogen I</name>
        <dbReference type="ChEBI" id="CHEBI:62631"/>
    </ligand>
</feature>
<feature type="binding site" evidence="1">
    <location>
        <position position="214"/>
    </location>
    <ligand>
        <name>coproporphyrinogen III</name>
        <dbReference type="ChEBI" id="CHEBI:57309"/>
    </ligand>
</feature>
<feature type="binding site" evidence="1">
    <location>
        <position position="334"/>
    </location>
    <ligand>
        <name>coproporphyrinogen I</name>
        <dbReference type="ChEBI" id="CHEBI:62631"/>
    </ligand>
</feature>
<feature type="binding site" evidence="1">
    <location>
        <position position="334"/>
    </location>
    <ligand>
        <name>coproporphyrinogen III</name>
        <dbReference type="ChEBI" id="CHEBI:57309"/>
    </ligand>
</feature>
<feature type="site" description="Transition state stabilizer" evidence="1">
    <location>
        <position position="82"/>
    </location>
</feature>
<comment type="function">
    <text evidence="1">Catalyzes the decarboxylation of four acetate groups of uroporphyrinogen-III to yield coproporphyrinogen-III.</text>
</comment>
<comment type="catalytic activity">
    <reaction evidence="1">
        <text>uroporphyrinogen III + 4 H(+) = coproporphyrinogen III + 4 CO2</text>
        <dbReference type="Rhea" id="RHEA:19865"/>
        <dbReference type="ChEBI" id="CHEBI:15378"/>
        <dbReference type="ChEBI" id="CHEBI:16526"/>
        <dbReference type="ChEBI" id="CHEBI:57308"/>
        <dbReference type="ChEBI" id="CHEBI:57309"/>
        <dbReference type="EC" id="4.1.1.37"/>
    </reaction>
    <physiologicalReaction direction="left-to-right" evidence="1">
        <dbReference type="Rhea" id="RHEA:19866"/>
    </physiologicalReaction>
</comment>
<comment type="pathway">
    <text evidence="1">Porphyrin-containing compound metabolism; protoporphyrin-IX biosynthesis; coproporphyrinogen-III from 5-aminolevulinate: step 4/4.</text>
</comment>
<comment type="subunit">
    <text evidence="1">Homodimer.</text>
</comment>
<comment type="subcellular location">
    <subcellularLocation>
        <location evidence="2">Cytoplasm</location>
        <location evidence="2">Cytosol</location>
    </subcellularLocation>
</comment>
<comment type="similarity">
    <text evidence="3">Belongs to the uroporphyrinogen decarboxylase family.</text>
</comment>
<keyword id="KW-0963">Cytoplasm</keyword>
<keyword id="KW-0210">Decarboxylase</keyword>
<keyword id="KW-0350">Heme biosynthesis</keyword>
<keyword id="KW-0456">Lyase</keyword>
<keyword id="KW-0627">Porphyrin biosynthesis</keyword>
<keyword id="KW-1185">Reference proteome</keyword>
<protein>
    <recommendedName>
        <fullName>Uroporphyrinogen decarboxylase</fullName>
        <shortName>UPD</shortName>
        <shortName>URO-D</shortName>
        <ecNumber>4.1.1.37</ecNumber>
    </recommendedName>
</protein>